<comment type="function">
    <text evidence="1">Catalyzes the cyclization of GTP to (8S)-3',8-cyclo-7,8-dihydroguanosine 5'-triphosphate.</text>
</comment>
<comment type="catalytic activity">
    <reaction evidence="1">
        <text>GTP + AH2 + S-adenosyl-L-methionine = (8S)-3',8-cyclo-7,8-dihydroguanosine 5'-triphosphate + 5'-deoxyadenosine + L-methionine + A + H(+)</text>
        <dbReference type="Rhea" id="RHEA:49576"/>
        <dbReference type="ChEBI" id="CHEBI:13193"/>
        <dbReference type="ChEBI" id="CHEBI:15378"/>
        <dbReference type="ChEBI" id="CHEBI:17319"/>
        <dbReference type="ChEBI" id="CHEBI:17499"/>
        <dbReference type="ChEBI" id="CHEBI:37565"/>
        <dbReference type="ChEBI" id="CHEBI:57844"/>
        <dbReference type="ChEBI" id="CHEBI:59789"/>
        <dbReference type="ChEBI" id="CHEBI:131766"/>
        <dbReference type="EC" id="4.1.99.22"/>
    </reaction>
</comment>
<comment type="cofactor">
    <cofactor evidence="1">
        <name>[4Fe-4S] cluster</name>
        <dbReference type="ChEBI" id="CHEBI:49883"/>
    </cofactor>
    <text evidence="1">Binds 2 [4Fe-4S] clusters. Binds 1 [4Fe-4S] cluster coordinated with 3 cysteines and an exchangeable S-adenosyl-L-methionine and 1 [4Fe-4S] cluster coordinated with 3 cysteines and the GTP-derived substrate.</text>
</comment>
<comment type="pathway">
    <text evidence="1">Cofactor biosynthesis; molybdopterin biosynthesis.</text>
</comment>
<comment type="subunit">
    <text evidence="1">Monomer and homodimer.</text>
</comment>
<comment type="similarity">
    <text evidence="1">Belongs to the radical SAM superfamily. MoaA family.</text>
</comment>
<proteinExistence type="inferred from homology"/>
<dbReference type="EC" id="4.1.99.22" evidence="1"/>
<dbReference type="EMBL" id="BA000022">
    <property type="protein sequence ID" value="BAA10451.1"/>
    <property type="molecule type" value="Genomic_DNA"/>
</dbReference>
<dbReference type="PIR" id="S75716">
    <property type="entry name" value="S75716"/>
</dbReference>
<dbReference type="SMR" id="Q55369"/>
<dbReference type="FunCoup" id="Q55369">
    <property type="interactions" value="453"/>
</dbReference>
<dbReference type="STRING" id="1148.gene:10499952"/>
<dbReference type="PaxDb" id="1148-1001211"/>
<dbReference type="EnsemblBacteria" id="BAA10451">
    <property type="protein sequence ID" value="BAA10451"/>
    <property type="gene ID" value="BAA10451"/>
</dbReference>
<dbReference type="KEGG" id="syn:slr0901"/>
<dbReference type="eggNOG" id="COG2896">
    <property type="taxonomic scope" value="Bacteria"/>
</dbReference>
<dbReference type="InParanoid" id="Q55369"/>
<dbReference type="PhylomeDB" id="Q55369"/>
<dbReference type="UniPathway" id="UPA00344"/>
<dbReference type="Proteomes" id="UP000001425">
    <property type="component" value="Chromosome"/>
</dbReference>
<dbReference type="GO" id="GO:0051539">
    <property type="term" value="F:4 iron, 4 sulfur cluster binding"/>
    <property type="evidence" value="ECO:0007669"/>
    <property type="project" value="UniProtKB-UniRule"/>
</dbReference>
<dbReference type="GO" id="GO:0061799">
    <property type="term" value="F:cyclic pyranopterin monophosphate synthase activity"/>
    <property type="evidence" value="ECO:0000318"/>
    <property type="project" value="GO_Central"/>
</dbReference>
<dbReference type="GO" id="GO:0061798">
    <property type="term" value="F:GTP 3',8'-cyclase activity"/>
    <property type="evidence" value="ECO:0000318"/>
    <property type="project" value="GO_Central"/>
</dbReference>
<dbReference type="GO" id="GO:0005525">
    <property type="term" value="F:GTP binding"/>
    <property type="evidence" value="ECO:0007669"/>
    <property type="project" value="UniProtKB-UniRule"/>
</dbReference>
<dbReference type="GO" id="GO:0046872">
    <property type="term" value="F:metal ion binding"/>
    <property type="evidence" value="ECO:0007669"/>
    <property type="project" value="UniProtKB-KW"/>
</dbReference>
<dbReference type="GO" id="GO:1904047">
    <property type="term" value="F:S-adenosyl-L-methionine binding"/>
    <property type="evidence" value="ECO:0007669"/>
    <property type="project" value="UniProtKB-UniRule"/>
</dbReference>
<dbReference type="GO" id="GO:0006777">
    <property type="term" value="P:Mo-molybdopterin cofactor biosynthetic process"/>
    <property type="evidence" value="ECO:0000318"/>
    <property type="project" value="GO_Central"/>
</dbReference>
<dbReference type="CDD" id="cd01335">
    <property type="entry name" value="Radical_SAM"/>
    <property type="match status" value="1"/>
</dbReference>
<dbReference type="Gene3D" id="3.20.20.70">
    <property type="entry name" value="Aldolase class I"/>
    <property type="match status" value="1"/>
</dbReference>
<dbReference type="HAMAP" id="MF_01225_B">
    <property type="entry name" value="MoaA_B"/>
    <property type="match status" value="1"/>
</dbReference>
<dbReference type="InterPro" id="IPR013785">
    <property type="entry name" value="Aldolase_TIM"/>
</dbReference>
<dbReference type="InterPro" id="IPR006638">
    <property type="entry name" value="Elp3/MiaA/NifB-like_rSAM"/>
</dbReference>
<dbReference type="InterPro" id="IPR013483">
    <property type="entry name" value="MoaA"/>
</dbReference>
<dbReference type="InterPro" id="IPR000385">
    <property type="entry name" value="MoaA_NifB_PqqE_Fe-S-bd_CS"/>
</dbReference>
<dbReference type="InterPro" id="IPR010505">
    <property type="entry name" value="MoaA_twitch"/>
</dbReference>
<dbReference type="InterPro" id="IPR050105">
    <property type="entry name" value="MoCo_biosynth_MoaA/MoaC"/>
</dbReference>
<dbReference type="InterPro" id="IPR007197">
    <property type="entry name" value="rSAM"/>
</dbReference>
<dbReference type="NCBIfam" id="TIGR02666">
    <property type="entry name" value="moaA"/>
    <property type="match status" value="1"/>
</dbReference>
<dbReference type="PANTHER" id="PTHR22960:SF0">
    <property type="entry name" value="MOLYBDENUM COFACTOR BIOSYNTHESIS PROTEIN 1"/>
    <property type="match status" value="1"/>
</dbReference>
<dbReference type="PANTHER" id="PTHR22960">
    <property type="entry name" value="MOLYBDOPTERIN COFACTOR SYNTHESIS PROTEIN A"/>
    <property type="match status" value="1"/>
</dbReference>
<dbReference type="Pfam" id="PF13353">
    <property type="entry name" value="Fer4_12"/>
    <property type="match status" value="1"/>
</dbReference>
<dbReference type="Pfam" id="PF06463">
    <property type="entry name" value="Mob_synth_C"/>
    <property type="match status" value="1"/>
</dbReference>
<dbReference type="Pfam" id="PF04055">
    <property type="entry name" value="Radical_SAM"/>
    <property type="match status" value="1"/>
</dbReference>
<dbReference type="SFLD" id="SFLDG01383">
    <property type="entry name" value="cyclic_pyranopterin_phosphate"/>
    <property type="match status" value="1"/>
</dbReference>
<dbReference type="SFLD" id="SFLDS00029">
    <property type="entry name" value="Radical_SAM"/>
    <property type="match status" value="1"/>
</dbReference>
<dbReference type="SMART" id="SM00729">
    <property type="entry name" value="Elp3"/>
    <property type="match status" value="1"/>
</dbReference>
<dbReference type="SUPFAM" id="SSF102114">
    <property type="entry name" value="Radical SAM enzymes"/>
    <property type="match status" value="1"/>
</dbReference>
<dbReference type="PROSITE" id="PS01305">
    <property type="entry name" value="MOAA_NIFB_PQQE"/>
    <property type="match status" value="1"/>
</dbReference>
<dbReference type="PROSITE" id="PS51918">
    <property type="entry name" value="RADICAL_SAM"/>
    <property type="match status" value="1"/>
</dbReference>
<reference key="1">
    <citation type="journal article" date="1995" name="DNA Res.">
        <title>Sequence analysis of the genome of the unicellular cyanobacterium Synechocystis sp. strain PCC6803. I. Sequence features in the 1 Mb region from map positions 64% to 92% of the genome.</title>
        <authorList>
            <person name="Kaneko T."/>
            <person name="Tanaka A."/>
            <person name="Sato S."/>
            <person name="Kotani H."/>
            <person name="Sazuka T."/>
            <person name="Miyajima N."/>
            <person name="Sugiura M."/>
            <person name="Tabata S."/>
        </authorList>
    </citation>
    <scope>NUCLEOTIDE SEQUENCE [LARGE SCALE GENOMIC DNA]</scope>
    <source>
        <strain>ATCC 27184 / PCC 6803 / N-1</strain>
    </source>
</reference>
<reference key="2">
    <citation type="journal article" date="1996" name="DNA Res.">
        <title>Sequence analysis of the genome of the unicellular cyanobacterium Synechocystis sp. strain PCC6803. II. Sequence determination of the entire genome and assignment of potential protein-coding regions.</title>
        <authorList>
            <person name="Kaneko T."/>
            <person name="Sato S."/>
            <person name="Kotani H."/>
            <person name="Tanaka A."/>
            <person name="Asamizu E."/>
            <person name="Nakamura Y."/>
            <person name="Miyajima N."/>
            <person name="Hirosawa M."/>
            <person name="Sugiura M."/>
            <person name="Sasamoto S."/>
            <person name="Kimura T."/>
            <person name="Hosouchi T."/>
            <person name="Matsuno A."/>
            <person name="Muraki A."/>
            <person name="Nakazaki N."/>
            <person name="Naruo K."/>
            <person name="Okumura S."/>
            <person name="Shimpo S."/>
            <person name="Takeuchi C."/>
            <person name="Wada T."/>
            <person name="Watanabe A."/>
            <person name="Yamada M."/>
            <person name="Yasuda M."/>
            <person name="Tabata S."/>
        </authorList>
    </citation>
    <scope>NUCLEOTIDE SEQUENCE [LARGE SCALE GENOMIC DNA]</scope>
    <source>
        <strain>ATCC 27184 / PCC 6803 / Kazusa</strain>
    </source>
</reference>
<keyword id="KW-0004">4Fe-4S</keyword>
<keyword id="KW-0342">GTP-binding</keyword>
<keyword id="KW-0408">Iron</keyword>
<keyword id="KW-0411">Iron-sulfur</keyword>
<keyword id="KW-0456">Lyase</keyword>
<keyword id="KW-0479">Metal-binding</keyword>
<keyword id="KW-0501">Molybdenum cofactor biosynthesis</keyword>
<keyword id="KW-0547">Nucleotide-binding</keyword>
<keyword id="KW-1185">Reference proteome</keyword>
<keyword id="KW-0949">S-adenosyl-L-methionine</keyword>
<name>MOAA_SYNY3</name>
<sequence>MFSFLCLVELALPMSKTLVDSYGRRIRKLRVSLTDQCNLRCHYCMPVDAIFLEQSSYLSCQEYGEIIGELIALGLEEVRLTGGEPLLRRNFTEIVRAIGQLKLKKIGLTTNGIVLDRHLDTLGENNVLDLNVSLDSLNAKTFSEITHRNCLNTILRNLELASRQGFKIKLNTVVMREINDREIFDLIEYAKRWEMEIRFLEIMRIGYACRHQEKTFISAQELLAKIQQKYSLKPIQSALDATAFRYSTSCGGIIGFIASESQPFCGHCSRWRLSVDGTLRACLLKNEGINIRNFSSLERQHVYQQLLGMKPYLRPPEVSHAMHQIGG</sequence>
<feature type="chain" id="PRO_0000153005" description="GTP 3',8-cyclase">
    <location>
        <begin position="1"/>
        <end position="327"/>
    </location>
</feature>
<feature type="domain" description="Radical SAM core" evidence="2">
    <location>
        <begin position="21"/>
        <end position="233"/>
    </location>
</feature>
<feature type="binding site" evidence="1">
    <location>
        <position position="30"/>
    </location>
    <ligand>
        <name>GTP</name>
        <dbReference type="ChEBI" id="CHEBI:37565"/>
    </ligand>
</feature>
<feature type="binding site" evidence="1">
    <location>
        <position position="37"/>
    </location>
    <ligand>
        <name>[4Fe-4S] cluster</name>
        <dbReference type="ChEBI" id="CHEBI:49883"/>
        <label>1</label>
        <note>4Fe-4S-S-AdoMet</note>
    </ligand>
</feature>
<feature type="binding site" evidence="1">
    <location>
        <position position="41"/>
    </location>
    <ligand>
        <name>[4Fe-4S] cluster</name>
        <dbReference type="ChEBI" id="CHEBI:49883"/>
        <label>1</label>
        <note>4Fe-4S-S-AdoMet</note>
    </ligand>
</feature>
<feature type="binding site" evidence="1">
    <location>
        <position position="43"/>
    </location>
    <ligand>
        <name>S-adenosyl-L-methionine</name>
        <dbReference type="ChEBI" id="CHEBI:59789"/>
    </ligand>
</feature>
<feature type="binding site" evidence="1">
    <location>
        <position position="44"/>
    </location>
    <ligand>
        <name>[4Fe-4S] cluster</name>
        <dbReference type="ChEBI" id="CHEBI:49883"/>
        <label>1</label>
        <note>4Fe-4S-S-AdoMet</note>
    </ligand>
</feature>
<feature type="binding site" evidence="1">
    <location>
        <position position="79"/>
    </location>
    <ligand>
        <name>GTP</name>
        <dbReference type="ChEBI" id="CHEBI:37565"/>
    </ligand>
</feature>
<feature type="binding site" evidence="1">
    <location>
        <position position="83"/>
    </location>
    <ligand>
        <name>S-adenosyl-L-methionine</name>
        <dbReference type="ChEBI" id="CHEBI:59789"/>
    </ligand>
</feature>
<feature type="binding site" evidence="1">
    <location>
        <position position="109"/>
    </location>
    <ligand>
        <name>GTP</name>
        <dbReference type="ChEBI" id="CHEBI:37565"/>
    </ligand>
</feature>
<feature type="binding site" evidence="1">
    <location>
        <position position="133"/>
    </location>
    <ligand>
        <name>S-adenosyl-L-methionine</name>
        <dbReference type="ChEBI" id="CHEBI:59789"/>
    </ligand>
</feature>
<feature type="binding site" evidence="1">
    <location>
        <position position="169"/>
    </location>
    <ligand>
        <name>GTP</name>
        <dbReference type="ChEBI" id="CHEBI:37565"/>
    </ligand>
</feature>
<feature type="binding site" evidence="1">
    <location>
        <position position="203"/>
    </location>
    <ligand>
        <name>S-adenosyl-L-methionine</name>
        <dbReference type="ChEBI" id="CHEBI:59789"/>
    </ligand>
</feature>
<feature type="binding site" evidence="1">
    <location>
        <position position="265"/>
    </location>
    <ligand>
        <name>[4Fe-4S] cluster</name>
        <dbReference type="ChEBI" id="CHEBI:49883"/>
        <label>2</label>
        <note>4Fe-4S-substrate</note>
    </ligand>
</feature>
<feature type="binding site" evidence="1">
    <location>
        <position position="268"/>
    </location>
    <ligand>
        <name>[4Fe-4S] cluster</name>
        <dbReference type="ChEBI" id="CHEBI:49883"/>
        <label>2</label>
        <note>4Fe-4S-substrate</note>
    </ligand>
</feature>
<feature type="binding site" evidence="1">
    <location>
        <begin position="270"/>
        <end position="272"/>
    </location>
    <ligand>
        <name>GTP</name>
        <dbReference type="ChEBI" id="CHEBI:37565"/>
    </ligand>
</feature>
<feature type="binding site" evidence="1">
    <location>
        <position position="282"/>
    </location>
    <ligand>
        <name>[4Fe-4S] cluster</name>
        <dbReference type="ChEBI" id="CHEBI:49883"/>
        <label>2</label>
        <note>4Fe-4S-substrate</note>
    </ligand>
</feature>
<accession>Q55369</accession>
<gene>
    <name evidence="1" type="primary">moaA</name>
    <name type="ordered locus">slr0901</name>
</gene>
<protein>
    <recommendedName>
        <fullName evidence="1">GTP 3',8-cyclase</fullName>
        <ecNumber evidence="1">4.1.99.22</ecNumber>
    </recommendedName>
    <alternativeName>
        <fullName evidence="1">Molybdenum cofactor biosynthesis protein A</fullName>
    </alternativeName>
</protein>
<organism>
    <name type="scientific">Synechocystis sp. (strain ATCC 27184 / PCC 6803 / Kazusa)</name>
    <dbReference type="NCBI Taxonomy" id="1111708"/>
    <lineage>
        <taxon>Bacteria</taxon>
        <taxon>Bacillati</taxon>
        <taxon>Cyanobacteriota</taxon>
        <taxon>Cyanophyceae</taxon>
        <taxon>Synechococcales</taxon>
        <taxon>Merismopediaceae</taxon>
        <taxon>Synechocystis</taxon>
    </lineage>
</organism>
<evidence type="ECO:0000255" key="1">
    <source>
        <dbReference type="HAMAP-Rule" id="MF_01225"/>
    </source>
</evidence>
<evidence type="ECO:0000255" key="2">
    <source>
        <dbReference type="PROSITE-ProRule" id="PRU01266"/>
    </source>
</evidence>